<evidence type="ECO:0000255" key="1">
    <source>
        <dbReference type="HAMAP-Rule" id="MF_01451"/>
    </source>
</evidence>
<sequence>MGEVKWTKEQQQAIDVHGCNLLVSAAAGSGKTAVLVERIIKMITDIKNPVDIDRLLVVTFTNAAASEMKERIGKAIGKELTKHPKSKQLQRQLTLLNRASITTIHSFCLETIRNNFHYIDLDPNFRIGDETETVLLKGEIIEGIFEDLYEPENCTQEFLNLVEFYSSNKDDVALQNIVLNLYDFVMSSKNPKKQLQDMAEQFNVDESYNFGESKWAKVLMDDVELELSGLKDMMEEALKLINDTNGLDAYLEGFTDELLMINDLILNAKTSWDSLYNGLSEVKFGRLKTCRNCEDKKTQEKVKDIRNKVKKQLQDEIKKKITSYSTKEIVTDLRNLYPIMKSLCDLVIEFMDRYSKAKKERGIIDFNDFEHFCLEILGHEEVALKLRQKYIEILVDEYQDSNYVQEAIINSIARRHEETGNPINVFMVGDVKQSIYRFRQAKPELFLKKYNSYLEGENAKERKVNLFKNFRSRKEVLDGVNFIFKQIMSENIGELEYGDDEALYLGADFEQYEDKSLVGGPIELNLIEKSKDETKEEESEEEEILSNIQVEARFVAKKINELVNPKIGEPFKVYDNELKAYRNVEYRDIVVLLRSTSNWAPVFTDEMKENLIPAYADVGNGYFETVEIKTILSLLEIIDNPRQDIPLIAVLRSPIASFTPEELIDIRLENKDGDFYGGLLKVASSEDRDDNWILFKRKCNSFLEKLNYWREKSIHMPIDEFIWYLYMETGYYGYVGALAGGMQRQANLKILFQRARQYEKTSYKGLFNFINFINRLKVSSGDMGSAKILGENDNVVRIMSIHKSKGLEFPVIILSALGKNFNMQDLNKRILYHDELGFGPDYIDLDKRIIYETVPKSALKKKIKLESLSEEMRILYVALTRAKEKLILTGAVNDIEKSAKKWSYALEGEDYKLSQYQVMTGKNYLDWICPVIMRHKDGEVLRELAGIEIFEKVNLLSDESSWKITTDNISGILQNDDETNEIILEDIKEIEDIEESSSYYDEINERLNFKYKYIESSKLPTLLTVTELKRMKNSSMYEDYSRDMYTPKLVKKPMFMEKDKKLKGAEKGTAMHAVMQKINYSEELTIEDINRQMETMVEKEFITKEQADSVEAEKILNFFKSNIGKRLLKAENVRRETPFHMELKSTEIYESLPKEIYENENIMIQGIIDCYFEEEDGIVLLDYKSDYFKEGQEEAIIKKYKVQIDYYARAIEELTGKVVKEKYLYLFYGDKEVEIK</sequence>
<name>ADDA_CLONN</name>
<feature type="chain" id="PRO_0000379260" description="ATP-dependent helicase/nuclease subunit A">
    <location>
        <begin position="1"/>
        <end position="1236"/>
    </location>
</feature>
<feature type="domain" description="UvrD-like helicase ATP-binding" evidence="1">
    <location>
        <begin position="4"/>
        <end position="473"/>
    </location>
</feature>
<feature type="domain" description="UvrD-like helicase C-terminal" evidence="1">
    <location>
        <begin position="512"/>
        <end position="806"/>
    </location>
</feature>
<feature type="binding site" evidence="1">
    <location>
        <begin position="25"/>
        <end position="32"/>
    </location>
    <ligand>
        <name>ATP</name>
        <dbReference type="ChEBI" id="CHEBI:30616"/>
    </ligand>
</feature>
<comment type="function">
    <text evidence="1">The heterodimer acts as both an ATP-dependent DNA helicase and an ATP-dependent, dual-direction single-stranded exonuclease. Recognizes the chi site generating a DNA molecule suitable for the initiation of homologous recombination. The AddA nuclease domain is required for chi fragment generation; this subunit has the helicase and 3' -&gt; 5' nuclease activities.</text>
</comment>
<comment type="catalytic activity">
    <reaction evidence="1">
        <text>Couples ATP hydrolysis with the unwinding of duplex DNA by translocating in the 3'-5' direction.</text>
        <dbReference type="EC" id="5.6.2.4"/>
    </reaction>
</comment>
<comment type="catalytic activity">
    <reaction evidence="1">
        <text>ATP + H2O = ADP + phosphate + H(+)</text>
        <dbReference type="Rhea" id="RHEA:13065"/>
        <dbReference type="ChEBI" id="CHEBI:15377"/>
        <dbReference type="ChEBI" id="CHEBI:15378"/>
        <dbReference type="ChEBI" id="CHEBI:30616"/>
        <dbReference type="ChEBI" id="CHEBI:43474"/>
        <dbReference type="ChEBI" id="CHEBI:456216"/>
        <dbReference type="EC" id="5.6.2.4"/>
    </reaction>
</comment>
<comment type="cofactor">
    <cofactor evidence="1">
        <name>Mg(2+)</name>
        <dbReference type="ChEBI" id="CHEBI:18420"/>
    </cofactor>
</comment>
<comment type="subunit">
    <text evidence="1">Heterodimer of AddA and AddB/RexB.</text>
</comment>
<comment type="similarity">
    <text evidence="1">Belongs to the helicase family. AddA subfamily.</text>
</comment>
<keyword id="KW-0067">ATP-binding</keyword>
<keyword id="KW-0227">DNA damage</keyword>
<keyword id="KW-0234">DNA repair</keyword>
<keyword id="KW-0238">DNA-binding</keyword>
<keyword id="KW-0269">Exonuclease</keyword>
<keyword id="KW-0347">Helicase</keyword>
<keyword id="KW-0378">Hydrolase</keyword>
<keyword id="KW-0413">Isomerase</keyword>
<keyword id="KW-0540">Nuclease</keyword>
<keyword id="KW-0547">Nucleotide-binding</keyword>
<keyword id="KW-1185">Reference proteome</keyword>
<accession>A0PY67</accession>
<protein>
    <recommendedName>
        <fullName evidence="1">ATP-dependent helicase/nuclease subunit A</fullName>
        <ecNumber evidence="1">3.1.-.-</ecNumber>
        <ecNumber evidence="1">5.6.2.4</ecNumber>
    </recommendedName>
    <alternativeName>
        <fullName evidence="1">ATP-dependent helicase/nuclease AddA</fullName>
    </alternativeName>
    <alternativeName>
        <fullName evidence="1">DNA 3'-5' helicase AddA</fullName>
    </alternativeName>
</protein>
<dbReference type="EC" id="3.1.-.-" evidence="1"/>
<dbReference type="EC" id="5.6.2.4" evidence="1"/>
<dbReference type="EMBL" id="CP000382">
    <property type="protein sequence ID" value="ABK61679.1"/>
    <property type="molecule type" value="Genomic_DNA"/>
</dbReference>
<dbReference type="RefSeq" id="WP_011721327.1">
    <property type="nucleotide sequence ID" value="NC_008593.1"/>
</dbReference>
<dbReference type="SMR" id="A0PY67"/>
<dbReference type="STRING" id="386415.NT01CX_1236"/>
<dbReference type="KEGG" id="cno:NT01CX_1236"/>
<dbReference type="PATRIC" id="fig|386415.7.peg.346"/>
<dbReference type="eggNOG" id="COG1074">
    <property type="taxonomic scope" value="Bacteria"/>
</dbReference>
<dbReference type="HOGENOM" id="CLU_001114_3_1_9"/>
<dbReference type="Proteomes" id="UP000008220">
    <property type="component" value="Chromosome"/>
</dbReference>
<dbReference type="GO" id="GO:0005829">
    <property type="term" value="C:cytosol"/>
    <property type="evidence" value="ECO:0007669"/>
    <property type="project" value="TreeGrafter"/>
</dbReference>
<dbReference type="GO" id="GO:0033202">
    <property type="term" value="C:DNA helicase complex"/>
    <property type="evidence" value="ECO:0007669"/>
    <property type="project" value="TreeGrafter"/>
</dbReference>
<dbReference type="GO" id="GO:0043138">
    <property type="term" value="F:3'-5' DNA helicase activity"/>
    <property type="evidence" value="ECO:0007669"/>
    <property type="project" value="UniProtKB-UniRule"/>
</dbReference>
<dbReference type="GO" id="GO:0008408">
    <property type="term" value="F:3'-5' exonuclease activity"/>
    <property type="evidence" value="ECO:0007669"/>
    <property type="project" value="UniProtKB-UniRule"/>
</dbReference>
<dbReference type="GO" id="GO:0005524">
    <property type="term" value="F:ATP binding"/>
    <property type="evidence" value="ECO:0007669"/>
    <property type="project" value="UniProtKB-UniRule"/>
</dbReference>
<dbReference type="GO" id="GO:0016887">
    <property type="term" value="F:ATP hydrolysis activity"/>
    <property type="evidence" value="ECO:0007669"/>
    <property type="project" value="RHEA"/>
</dbReference>
<dbReference type="GO" id="GO:0003690">
    <property type="term" value="F:double-stranded DNA binding"/>
    <property type="evidence" value="ECO:0007669"/>
    <property type="project" value="UniProtKB-UniRule"/>
</dbReference>
<dbReference type="GO" id="GO:0000724">
    <property type="term" value="P:double-strand break repair via homologous recombination"/>
    <property type="evidence" value="ECO:0007669"/>
    <property type="project" value="UniProtKB-UniRule"/>
</dbReference>
<dbReference type="CDD" id="cd17932">
    <property type="entry name" value="DEXQc_UvrD"/>
    <property type="match status" value="1"/>
</dbReference>
<dbReference type="FunFam" id="3.40.50.300:FF:001236">
    <property type="entry name" value="ATP-dependent helicase/nuclease subunit A"/>
    <property type="match status" value="1"/>
</dbReference>
<dbReference type="Gene3D" id="3.90.320.10">
    <property type="match status" value="1"/>
</dbReference>
<dbReference type="Gene3D" id="3.40.50.300">
    <property type="entry name" value="P-loop containing nucleotide triphosphate hydrolases"/>
    <property type="match status" value="4"/>
</dbReference>
<dbReference type="HAMAP" id="MF_01451">
    <property type="entry name" value="AddA"/>
    <property type="match status" value="1"/>
</dbReference>
<dbReference type="InterPro" id="IPR014152">
    <property type="entry name" value="AddA"/>
</dbReference>
<dbReference type="InterPro" id="IPR014017">
    <property type="entry name" value="DNA_helicase_UvrD-like_C"/>
</dbReference>
<dbReference type="InterPro" id="IPR000212">
    <property type="entry name" value="DNA_helicase_UvrD/REP"/>
</dbReference>
<dbReference type="InterPro" id="IPR027417">
    <property type="entry name" value="P-loop_NTPase"/>
</dbReference>
<dbReference type="InterPro" id="IPR011604">
    <property type="entry name" value="PDDEXK-like_dom_sf"/>
</dbReference>
<dbReference type="InterPro" id="IPR038726">
    <property type="entry name" value="PDDEXK_AddAB-type"/>
</dbReference>
<dbReference type="InterPro" id="IPR011335">
    <property type="entry name" value="Restrct_endonuc-II-like"/>
</dbReference>
<dbReference type="InterPro" id="IPR014016">
    <property type="entry name" value="UvrD-like_ATP-bd"/>
</dbReference>
<dbReference type="NCBIfam" id="TIGR02785">
    <property type="entry name" value="addA_Gpos"/>
    <property type="match status" value="1"/>
</dbReference>
<dbReference type="PANTHER" id="PTHR11070:SF48">
    <property type="entry name" value="ATP-DEPENDENT HELICASE_NUCLEASE SUBUNIT A"/>
    <property type="match status" value="1"/>
</dbReference>
<dbReference type="PANTHER" id="PTHR11070">
    <property type="entry name" value="UVRD / RECB / PCRA DNA HELICASE FAMILY MEMBER"/>
    <property type="match status" value="1"/>
</dbReference>
<dbReference type="Pfam" id="PF12705">
    <property type="entry name" value="PDDEXK_1"/>
    <property type="match status" value="1"/>
</dbReference>
<dbReference type="Pfam" id="PF00580">
    <property type="entry name" value="UvrD-helicase"/>
    <property type="match status" value="1"/>
</dbReference>
<dbReference type="Pfam" id="PF13361">
    <property type="entry name" value="UvrD_C"/>
    <property type="match status" value="1"/>
</dbReference>
<dbReference type="SUPFAM" id="SSF52540">
    <property type="entry name" value="P-loop containing nucleoside triphosphate hydrolases"/>
    <property type="match status" value="1"/>
</dbReference>
<dbReference type="SUPFAM" id="SSF52980">
    <property type="entry name" value="Restriction endonuclease-like"/>
    <property type="match status" value="1"/>
</dbReference>
<dbReference type="PROSITE" id="PS51198">
    <property type="entry name" value="UVRD_HELICASE_ATP_BIND"/>
    <property type="match status" value="1"/>
</dbReference>
<dbReference type="PROSITE" id="PS51217">
    <property type="entry name" value="UVRD_HELICASE_CTER"/>
    <property type="match status" value="1"/>
</dbReference>
<gene>
    <name evidence="1" type="primary">addA</name>
    <name type="ordered locus">NT01CX_1236</name>
</gene>
<organism>
    <name type="scientific">Clostridium novyi (strain NT)</name>
    <dbReference type="NCBI Taxonomy" id="386415"/>
    <lineage>
        <taxon>Bacteria</taxon>
        <taxon>Bacillati</taxon>
        <taxon>Bacillota</taxon>
        <taxon>Clostridia</taxon>
        <taxon>Eubacteriales</taxon>
        <taxon>Clostridiaceae</taxon>
        <taxon>Clostridium</taxon>
    </lineage>
</organism>
<proteinExistence type="inferred from homology"/>
<reference key="1">
    <citation type="journal article" date="2006" name="Nat. Biotechnol.">
        <title>The genome and transcriptomes of the anti-tumor agent Clostridium novyi-NT.</title>
        <authorList>
            <person name="Bettegowda C."/>
            <person name="Huang X."/>
            <person name="Lin J."/>
            <person name="Cheong I."/>
            <person name="Kohli M."/>
            <person name="Szabo S.A."/>
            <person name="Zhang X."/>
            <person name="Diaz L.A. Jr."/>
            <person name="Velculescu V.E."/>
            <person name="Parmigiani G."/>
            <person name="Kinzler K.W."/>
            <person name="Vogelstein B."/>
            <person name="Zhou S."/>
        </authorList>
    </citation>
    <scope>NUCLEOTIDE SEQUENCE [LARGE SCALE GENOMIC DNA]</scope>
    <source>
        <strain>NT</strain>
    </source>
</reference>